<dbReference type="EC" id="4.2.1.11" evidence="1"/>
<dbReference type="EMBL" id="BA000037">
    <property type="protein sequence ID" value="BAC95582.1"/>
    <property type="status" value="ALT_INIT"/>
    <property type="molecule type" value="Genomic_DNA"/>
</dbReference>
<dbReference type="RefSeq" id="WP_013571121.1">
    <property type="nucleotide sequence ID" value="NC_005139.1"/>
</dbReference>
<dbReference type="SMR" id="Q7MHQ1"/>
<dbReference type="STRING" id="672.VV93_v1c25270"/>
<dbReference type="KEGG" id="vvy:VV2818"/>
<dbReference type="eggNOG" id="COG0148">
    <property type="taxonomic scope" value="Bacteria"/>
</dbReference>
<dbReference type="HOGENOM" id="CLU_031223_2_1_6"/>
<dbReference type="UniPathway" id="UPA00109">
    <property type="reaction ID" value="UER00187"/>
</dbReference>
<dbReference type="Proteomes" id="UP000002675">
    <property type="component" value="Chromosome I"/>
</dbReference>
<dbReference type="GO" id="GO:0009986">
    <property type="term" value="C:cell surface"/>
    <property type="evidence" value="ECO:0007669"/>
    <property type="project" value="UniProtKB-SubCell"/>
</dbReference>
<dbReference type="GO" id="GO:0005576">
    <property type="term" value="C:extracellular region"/>
    <property type="evidence" value="ECO:0007669"/>
    <property type="project" value="UniProtKB-SubCell"/>
</dbReference>
<dbReference type="GO" id="GO:0000015">
    <property type="term" value="C:phosphopyruvate hydratase complex"/>
    <property type="evidence" value="ECO:0007669"/>
    <property type="project" value="InterPro"/>
</dbReference>
<dbReference type="GO" id="GO:0000287">
    <property type="term" value="F:magnesium ion binding"/>
    <property type="evidence" value="ECO:0007669"/>
    <property type="project" value="UniProtKB-UniRule"/>
</dbReference>
<dbReference type="GO" id="GO:0004634">
    <property type="term" value="F:phosphopyruvate hydratase activity"/>
    <property type="evidence" value="ECO:0007669"/>
    <property type="project" value="UniProtKB-UniRule"/>
</dbReference>
<dbReference type="GO" id="GO:0006096">
    <property type="term" value="P:glycolytic process"/>
    <property type="evidence" value="ECO:0007669"/>
    <property type="project" value="UniProtKB-UniRule"/>
</dbReference>
<dbReference type="CDD" id="cd03313">
    <property type="entry name" value="enolase"/>
    <property type="match status" value="1"/>
</dbReference>
<dbReference type="FunFam" id="3.20.20.120:FF:000001">
    <property type="entry name" value="Enolase"/>
    <property type="match status" value="1"/>
</dbReference>
<dbReference type="FunFam" id="3.30.390.10:FF:000001">
    <property type="entry name" value="Enolase"/>
    <property type="match status" value="1"/>
</dbReference>
<dbReference type="Gene3D" id="3.20.20.120">
    <property type="entry name" value="Enolase-like C-terminal domain"/>
    <property type="match status" value="1"/>
</dbReference>
<dbReference type="Gene3D" id="3.30.390.10">
    <property type="entry name" value="Enolase-like, N-terminal domain"/>
    <property type="match status" value="1"/>
</dbReference>
<dbReference type="HAMAP" id="MF_00318">
    <property type="entry name" value="Enolase"/>
    <property type="match status" value="1"/>
</dbReference>
<dbReference type="InterPro" id="IPR000941">
    <property type="entry name" value="Enolase"/>
</dbReference>
<dbReference type="InterPro" id="IPR036849">
    <property type="entry name" value="Enolase-like_C_sf"/>
</dbReference>
<dbReference type="InterPro" id="IPR029017">
    <property type="entry name" value="Enolase-like_N"/>
</dbReference>
<dbReference type="InterPro" id="IPR020810">
    <property type="entry name" value="Enolase_C"/>
</dbReference>
<dbReference type="InterPro" id="IPR020809">
    <property type="entry name" value="Enolase_CS"/>
</dbReference>
<dbReference type="InterPro" id="IPR020811">
    <property type="entry name" value="Enolase_N"/>
</dbReference>
<dbReference type="NCBIfam" id="TIGR01060">
    <property type="entry name" value="eno"/>
    <property type="match status" value="1"/>
</dbReference>
<dbReference type="PANTHER" id="PTHR11902">
    <property type="entry name" value="ENOLASE"/>
    <property type="match status" value="1"/>
</dbReference>
<dbReference type="PANTHER" id="PTHR11902:SF1">
    <property type="entry name" value="ENOLASE"/>
    <property type="match status" value="1"/>
</dbReference>
<dbReference type="Pfam" id="PF00113">
    <property type="entry name" value="Enolase_C"/>
    <property type="match status" value="1"/>
</dbReference>
<dbReference type="Pfam" id="PF03952">
    <property type="entry name" value="Enolase_N"/>
    <property type="match status" value="1"/>
</dbReference>
<dbReference type="PIRSF" id="PIRSF001400">
    <property type="entry name" value="Enolase"/>
    <property type="match status" value="1"/>
</dbReference>
<dbReference type="PRINTS" id="PR00148">
    <property type="entry name" value="ENOLASE"/>
</dbReference>
<dbReference type="SFLD" id="SFLDS00001">
    <property type="entry name" value="Enolase"/>
    <property type="match status" value="1"/>
</dbReference>
<dbReference type="SFLD" id="SFLDF00002">
    <property type="entry name" value="enolase"/>
    <property type="match status" value="1"/>
</dbReference>
<dbReference type="SMART" id="SM01192">
    <property type="entry name" value="Enolase_C"/>
    <property type="match status" value="1"/>
</dbReference>
<dbReference type="SMART" id="SM01193">
    <property type="entry name" value="Enolase_N"/>
    <property type="match status" value="1"/>
</dbReference>
<dbReference type="SUPFAM" id="SSF51604">
    <property type="entry name" value="Enolase C-terminal domain-like"/>
    <property type="match status" value="1"/>
</dbReference>
<dbReference type="SUPFAM" id="SSF54826">
    <property type="entry name" value="Enolase N-terminal domain-like"/>
    <property type="match status" value="1"/>
</dbReference>
<dbReference type="PROSITE" id="PS00164">
    <property type="entry name" value="ENOLASE"/>
    <property type="match status" value="1"/>
</dbReference>
<reference key="1">
    <citation type="journal article" date="2003" name="Genome Res.">
        <title>Comparative genome analysis of Vibrio vulnificus, a marine pathogen.</title>
        <authorList>
            <person name="Chen C.-Y."/>
            <person name="Wu K.-M."/>
            <person name="Chang Y.-C."/>
            <person name="Chang C.-H."/>
            <person name="Tsai H.-C."/>
            <person name="Liao T.-L."/>
            <person name="Liu Y.-M."/>
            <person name="Chen H.-J."/>
            <person name="Shen A.B.-T."/>
            <person name="Li J.-C."/>
            <person name="Su T.-L."/>
            <person name="Shao C.-P."/>
            <person name="Lee C.-T."/>
            <person name="Hor L.-I."/>
            <person name="Tsai S.-F."/>
        </authorList>
    </citation>
    <scope>NUCLEOTIDE SEQUENCE [LARGE SCALE GENOMIC DNA]</scope>
    <source>
        <strain>YJ016</strain>
    </source>
</reference>
<evidence type="ECO:0000255" key="1">
    <source>
        <dbReference type="HAMAP-Rule" id="MF_00318"/>
    </source>
</evidence>
<evidence type="ECO:0000305" key="2"/>
<organism>
    <name type="scientific">Vibrio vulnificus (strain YJ016)</name>
    <dbReference type="NCBI Taxonomy" id="196600"/>
    <lineage>
        <taxon>Bacteria</taxon>
        <taxon>Pseudomonadati</taxon>
        <taxon>Pseudomonadota</taxon>
        <taxon>Gammaproteobacteria</taxon>
        <taxon>Vibrionales</taxon>
        <taxon>Vibrionaceae</taxon>
        <taxon>Vibrio</taxon>
    </lineage>
</organism>
<accession>Q7MHQ1</accession>
<feature type="chain" id="PRO_0000134007" description="Enolase">
    <location>
        <begin position="1"/>
        <end position="433"/>
    </location>
</feature>
<feature type="active site" description="Proton donor" evidence="1">
    <location>
        <position position="209"/>
    </location>
</feature>
<feature type="active site" description="Proton acceptor" evidence="1">
    <location>
        <position position="343"/>
    </location>
</feature>
<feature type="binding site" evidence="1">
    <location>
        <position position="167"/>
    </location>
    <ligand>
        <name>(2R)-2-phosphoglycerate</name>
        <dbReference type="ChEBI" id="CHEBI:58289"/>
    </ligand>
</feature>
<feature type="binding site" evidence="1">
    <location>
        <position position="246"/>
    </location>
    <ligand>
        <name>Mg(2+)</name>
        <dbReference type="ChEBI" id="CHEBI:18420"/>
    </ligand>
</feature>
<feature type="binding site" evidence="1">
    <location>
        <position position="291"/>
    </location>
    <ligand>
        <name>Mg(2+)</name>
        <dbReference type="ChEBI" id="CHEBI:18420"/>
    </ligand>
</feature>
<feature type="binding site" evidence="1">
    <location>
        <position position="318"/>
    </location>
    <ligand>
        <name>Mg(2+)</name>
        <dbReference type="ChEBI" id="CHEBI:18420"/>
    </ligand>
</feature>
<feature type="binding site" evidence="1">
    <location>
        <position position="343"/>
    </location>
    <ligand>
        <name>(2R)-2-phosphoglycerate</name>
        <dbReference type="ChEBI" id="CHEBI:58289"/>
    </ligand>
</feature>
<feature type="binding site" evidence="1">
    <location>
        <position position="372"/>
    </location>
    <ligand>
        <name>(2R)-2-phosphoglycerate</name>
        <dbReference type="ChEBI" id="CHEBI:58289"/>
    </ligand>
</feature>
<feature type="binding site" evidence="1">
    <location>
        <position position="373"/>
    </location>
    <ligand>
        <name>(2R)-2-phosphoglycerate</name>
        <dbReference type="ChEBI" id="CHEBI:58289"/>
    </ligand>
</feature>
<feature type="binding site" evidence="1">
    <location>
        <position position="394"/>
    </location>
    <ligand>
        <name>(2R)-2-phosphoglycerate</name>
        <dbReference type="ChEBI" id="CHEBI:58289"/>
    </ligand>
</feature>
<keyword id="KW-0963">Cytoplasm</keyword>
<keyword id="KW-0324">Glycolysis</keyword>
<keyword id="KW-0456">Lyase</keyword>
<keyword id="KW-0460">Magnesium</keyword>
<keyword id="KW-0479">Metal-binding</keyword>
<keyword id="KW-0964">Secreted</keyword>
<proteinExistence type="inferred from homology"/>
<sequence length="433" mass="45535">MSKIVKVLGREIIDSRGNPTVEAEVHLEGGFVGMAAAPSGASTGSREALELRDGDKARFLGKGVLKAIEAVNGAIADALVGKDAKDQAAIDAIMIELDGTENKSKFGANAILAVSLANAKAAAASKGMPLYEHIAELNGTAGQFSMPLPMMNIINGGEHADNNVDIQEFMIQPVGAKTLKEAVRMGAEVFHNLAKVLKSKGYNTAVGDEGGFAPNLKSNAEALEVIAEAVAAAGYVLGKDVTLAMDCAASEFFDKEAGIYNMKGEGKTFTSEEFNHYLAGLVEQFPIVSIEDGLDESDWAGFAHQTQLLGDKIQLVGDDLFVTNTKILAEGIEKGIANSILIKFNQIGSLTETLAAIKMAKDAGYTAVISHRSGETEDATIADLAVGTAAGQIKTGSMSRSDRVAKYNQLIRIEEALGERAPFNGLKEVKGQA</sequence>
<name>ENO_VIBVY</name>
<gene>
    <name evidence="1" type="primary">eno</name>
    <name type="ordered locus">VV2818</name>
</gene>
<protein>
    <recommendedName>
        <fullName evidence="1">Enolase</fullName>
        <ecNumber evidence="1">4.2.1.11</ecNumber>
    </recommendedName>
    <alternativeName>
        <fullName evidence="1">2-phospho-D-glycerate hydro-lyase</fullName>
    </alternativeName>
    <alternativeName>
        <fullName evidence="1">2-phosphoglycerate dehydratase</fullName>
    </alternativeName>
</protein>
<comment type="function">
    <text evidence="1">Catalyzes the reversible conversion of 2-phosphoglycerate (2-PG) into phosphoenolpyruvate (PEP). It is essential for the degradation of carbohydrates via glycolysis.</text>
</comment>
<comment type="catalytic activity">
    <reaction evidence="1">
        <text>(2R)-2-phosphoglycerate = phosphoenolpyruvate + H2O</text>
        <dbReference type="Rhea" id="RHEA:10164"/>
        <dbReference type="ChEBI" id="CHEBI:15377"/>
        <dbReference type="ChEBI" id="CHEBI:58289"/>
        <dbReference type="ChEBI" id="CHEBI:58702"/>
        <dbReference type="EC" id="4.2.1.11"/>
    </reaction>
</comment>
<comment type="cofactor">
    <cofactor evidence="1">
        <name>Mg(2+)</name>
        <dbReference type="ChEBI" id="CHEBI:18420"/>
    </cofactor>
    <text evidence="1">Binds a second Mg(2+) ion via substrate during catalysis.</text>
</comment>
<comment type="pathway">
    <text evidence="1">Carbohydrate degradation; glycolysis; pyruvate from D-glyceraldehyde 3-phosphate: step 4/5.</text>
</comment>
<comment type="subunit">
    <text evidence="1">Component of the RNA degradosome, a multiprotein complex involved in RNA processing and mRNA degradation.</text>
</comment>
<comment type="subcellular location">
    <subcellularLocation>
        <location evidence="1">Cytoplasm</location>
    </subcellularLocation>
    <subcellularLocation>
        <location evidence="1">Secreted</location>
    </subcellularLocation>
    <subcellularLocation>
        <location evidence="1">Cell surface</location>
    </subcellularLocation>
    <text evidence="1">Fractions of enolase are present in both the cytoplasm and on the cell surface.</text>
</comment>
<comment type="similarity">
    <text evidence="1">Belongs to the enolase family.</text>
</comment>
<comment type="sequence caution" evidence="2">
    <conflict type="erroneous initiation">
        <sequence resource="EMBL-CDS" id="BAC95582"/>
    </conflict>
    <text>Extended N-terminus.</text>
</comment>